<comment type="function">
    <text evidence="1">Catalyzes the conversion of 3-deoxy-D-arabino-heptulosonate 7-phosphate (DAHP) to dehydroquinate (DHQ).</text>
</comment>
<comment type="catalytic activity">
    <reaction evidence="1">
        <text>7-phospho-2-dehydro-3-deoxy-D-arabino-heptonate = 3-dehydroquinate + phosphate</text>
        <dbReference type="Rhea" id="RHEA:21968"/>
        <dbReference type="ChEBI" id="CHEBI:32364"/>
        <dbReference type="ChEBI" id="CHEBI:43474"/>
        <dbReference type="ChEBI" id="CHEBI:58394"/>
        <dbReference type="EC" id="4.2.3.4"/>
    </reaction>
</comment>
<comment type="cofactor">
    <cofactor evidence="1">
        <name>Co(2+)</name>
        <dbReference type="ChEBI" id="CHEBI:48828"/>
    </cofactor>
    <cofactor evidence="1">
        <name>Zn(2+)</name>
        <dbReference type="ChEBI" id="CHEBI:29105"/>
    </cofactor>
    <text evidence="1">Binds 1 divalent metal cation per subunit. Can use either Co(2+) or Zn(2+).</text>
</comment>
<comment type="cofactor">
    <cofactor evidence="1">
        <name>NAD(+)</name>
        <dbReference type="ChEBI" id="CHEBI:57540"/>
    </cofactor>
</comment>
<comment type="pathway">
    <text evidence="1">Metabolic intermediate biosynthesis; chorismate biosynthesis; chorismate from D-erythrose 4-phosphate and phosphoenolpyruvate: step 2/7.</text>
</comment>
<comment type="subcellular location">
    <subcellularLocation>
        <location evidence="1">Cytoplasm</location>
    </subcellularLocation>
</comment>
<comment type="similarity">
    <text evidence="1">Belongs to the sugar phosphate cyclases superfamily. Dehydroquinate synthase family.</text>
</comment>
<name>AROB_SACD2</name>
<reference key="1">
    <citation type="journal article" date="2008" name="PLoS Genet.">
        <title>Complete genome sequence of the complex carbohydrate-degrading marine bacterium, Saccharophagus degradans strain 2-40 T.</title>
        <authorList>
            <person name="Weiner R.M."/>
            <person name="Taylor L.E. II"/>
            <person name="Henrissat B."/>
            <person name="Hauser L."/>
            <person name="Land M."/>
            <person name="Coutinho P.M."/>
            <person name="Rancurel C."/>
            <person name="Saunders E.H."/>
            <person name="Longmire A.G."/>
            <person name="Zhang H."/>
            <person name="Bayer E.A."/>
            <person name="Gilbert H.J."/>
            <person name="Larimer F."/>
            <person name="Zhulin I.B."/>
            <person name="Ekborg N.A."/>
            <person name="Lamed R."/>
            <person name="Richardson P.M."/>
            <person name="Borovok I."/>
            <person name="Hutcheson S."/>
        </authorList>
    </citation>
    <scope>NUCLEOTIDE SEQUENCE [LARGE SCALE GENOMIC DNA]</scope>
    <source>
        <strain>2-40 / ATCC 43961 / DSM 17024</strain>
    </source>
</reference>
<gene>
    <name evidence="1" type="primary">aroB</name>
    <name type="ordered locus">Sde_2685</name>
</gene>
<organism>
    <name type="scientific">Saccharophagus degradans (strain 2-40 / ATCC 43961 / DSM 17024)</name>
    <dbReference type="NCBI Taxonomy" id="203122"/>
    <lineage>
        <taxon>Bacteria</taxon>
        <taxon>Pseudomonadati</taxon>
        <taxon>Pseudomonadota</taxon>
        <taxon>Gammaproteobacteria</taxon>
        <taxon>Cellvibrionales</taxon>
        <taxon>Cellvibrionaceae</taxon>
        <taxon>Saccharophagus</taxon>
    </lineage>
</organism>
<accession>Q21H84</accession>
<evidence type="ECO:0000255" key="1">
    <source>
        <dbReference type="HAMAP-Rule" id="MF_00110"/>
    </source>
</evidence>
<feature type="chain" id="PRO_1000094592" description="3-dehydroquinate synthase">
    <location>
        <begin position="1"/>
        <end position="362"/>
    </location>
</feature>
<feature type="binding site" evidence="1">
    <location>
        <begin position="70"/>
        <end position="75"/>
    </location>
    <ligand>
        <name>NAD(+)</name>
        <dbReference type="ChEBI" id="CHEBI:57540"/>
    </ligand>
</feature>
<feature type="binding site" evidence="1">
    <location>
        <begin position="104"/>
        <end position="108"/>
    </location>
    <ligand>
        <name>NAD(+)</name>
        <dbReference type="ChEBI" id="CHEBI:57540"/>
    </ligand>
</feature>
<feature type="binding site" evidence="1">
    <location>
        <begin position="128"/>
        <end position="129"/>
    </location>
    <ligand>
        <name>NAD(+)</name>
        <dbReference type="ChEBI" id="CHEBI:57540"/>
    </ligand>
</feature>
<feature type="binding site" evidence="1">
    <location>
        <position position="141"/>
    </location>
    <ligand>
        <name>NAD(+)</name>
        <dbReference type="ChEBI" id="CHEBI:57540"/>
    </ligand>
</feature>
<feature type="binding site" evidence="1">
    <location>
        <position position="150"/>
    </location>
    <ligand>
        <name>NAD(+)</name>
        <dbReference type="ChEBI" id="CHEBI:57540"/>
    </ligand>
</feature>
<feature type="binding site" evidence="1">
    <location>
        <position position="183"/>
    </location>
    <ligand>
        <name>Zn(2+)</name>
        <dbReference type="ChEBI" id="CHEBI:29105"/>
    </ligand>
</feature>
<feature type="binding site" evidence="1">
    <location>
        <position position="246"/>
    </location>
    <ligand>
        <name>Zn(2+)</name>
        <dbReference type="ChEBI" id="CHEBI:29105"/>
    </ligand>
</feature>
<feature type="binding site" evidence="1">
    <location>
        <position position="263"/>
    </location>
    <ligand>
        <name>Zn(2+)</name>
        <dbReference type="ChEBI" id="CHEBI:29105"/>
    </ligand>
</feature>
<keyword id="KW-0028">Amino-acid biosynthesis</keyword>
<keyword id="KW-0057">Aromatic amino acid biosynthesis</keyword>
<keyword id="KW-0170">Cobalt</keyword>
<keyword id="KW-0963">Cytoplasm</keyword>
<keyword id="KW-0456">Lyase</keyword>
<keyword id="KW-0479">Metal-binding</keyword>
<keyword id="KW-0520">NAD</keyword>
<keyword id="KW-0547">Nucleotide-binding</keyword>
<keyword id="KW-1185">Reference proteome</keyword>
<keyword id="KW-0862">Zinc</keyword>
<protein>
    <recommendedName>
        <fullName evidence="1">3-dehydroquinate synthase</fullName>
        <shortName evidence="1">DHQS</shortName>
        <ecNumber evidence="1">4.2.3.4</ecNumber>
    </recommendedName>
</protein>
<sequence>MKTLHVDLGDRSYPIFIGAGLLANPEKFLPYLAAKQVLVVTNTTIDALYGDSFFSLFEGMDKAHKVVLPDGESYKNLEALNQIFDALLEGKHNRKTTLVALGGGVVGDMTGFAAAAYQRGVGFIQVPTTLLSQVDSSVGGKTGVNHPLGKNMIGAFHQPNVVVIDTDVLKTLPDRELSAGMAEVIKYGLIADYEFFCWLESNVKALMARDVDALEYAIERSCQIKADVVAQDETESGIRAILNLGHTFGHAIESDQGYGNWLHGEAVGAGMVMACELSCRMGWIDKPFCERAVALIAAAGLPIAPPESMSPEDFMKYMAVDKKVLDGGLRLVLPNKPGSSIVTDSFDADALAATLGRTGQLG</sequence>
<dbReference type="EC" id="4.2.3.4" evidence="1"/>
<dbReference type="EMBL" id="CP000282">
    <property type="protein sequence ID" value="ABD81945.1"/>
    <property type="molecule type" value="Genomic_DNA"/>
</dbReference>
<dbReference type="RefSeq" id="WP_011469162.1">
    <property type="nucleotide sequence ID" value="NC_007912.1"/>
</dbReference>
<dbReference type="SMR" id="Q21H84"/>
<dbReference type="STRING" id="203122.Sde_2685"/>
<dbReference type="GeneID" id="98614343"/>
<dbReference type="KEGG" id="sde:Sde_2685"/>
<dbReference type="eggNOG" id="COG0337">
    <property type="taxonomic scope" value="Bacteria"/>
</dbReference>
<dbReference type="HOGENOM" id="CLU_001201_0_2_6"/>
<dbReference type="OrthoDB" id="9806583at2"/>
<dbReference type="UniPathway" id="UPA00053">
    <property type="reaction ID" value="UER00085"/>
</dbReference>
<dbReference type="Proteomes" id="UP000001947">
    <property type="component" value="Chromosome"/>
</dbReference>
<dbReference type="GO" id="GO:0005737">
    <property type="term" value="C:cytoplasm"/>
    <property type="evidence" value="ECO:0007669"/>
    <property type="project" value="UniProtKB-SubCell"/>
</dbReference>
<dbReference type="GO" id="GO:0003856">
    <property type="term" value="F:3-dehydroquinate synthase activity"/>
    <property type="evidence" value="ECO:0007669"/>
    <property type="project" value="UniProtKB-UniRule"/>
</dbReference>
<dbReference type="GO" id="GO:0046872">
    <property type="term" value="F:metal ion binding"/>
    <property type="evidence" value="ECO:0007669"/>
    <property type="project" value="UniProtKB-KW"/>
</dbReference>
<dbReference type="GO" id="GO:0000166">
    <property type="term" value="F:nucleotide binding"/>
    <property type="evidence" value="ECO:0007669"/>
    <property type="project" value="UniProtKB-KW"/>
</dbReference>
<dbReference type="GO" id="GO:0008652">
    <property type="term" value="P:amino acid biosynthetic process"/>
    <property type="evidence" value="ECO:0007669"/>
    <property type="project" value="UniProtKB-KW"/>
</dbReference>
<dbReference type="GO" id="GO:0009073">
    <property type="term" value="P:aromatic amino acid family biosynthetic process"/>
    <property type="evidence" value="ECO:0007669"/>
    <property type="project" value="UniProtKB-KW"/>
</dbReference>
<dbReference type="GO" id="GO:0009423">
    <property type="term" value="P:chorismate biosynthetic process"/>
    <property type="evidence" value="ECO:0007669"/>
    <property type="project" value="UniProtKB-UniRule"/>
</dbReference>
<dbReference type="CDD" id="cd08195">
    <property type="entry name" value="DHQS"/>
    <property type="match status" value="1"/>
</dbReference>
<dbReference type="FunFam" id="1.20.1090.10:FF:000002">
    <property type="entry name" value="3-dehydroquinate synthase"/>
    <property type="match status" value="1"/>
</dbReference>
<dbReference type="FunFam" id="3.40.50.1970:FF:000001">
    <property type="entry name" value="3-dehydroquinate synthase"/>
    <property type="match status" value="1"/>
</dbReference>
<dbReference type="Gene3D" id="3.40.50.1970">
    <property type="match status" value="1"/>
</dbReference>
<dbReference type="Gene3D" id="1.20.1090.10">
    <property type="entry name" value="Dehydroquinate synthase-like - alpha domain"/>
    <property type="match status" value="1"/>
</dbReference>
<dbReference type="HAMAP" id="MF_00110">
    <property type="entry name" value="DHQ_synthase"/>
    <property type="match status" value="1"/>
</dbReference>
<dbReference type="InterPro" id="IPR050071">
    <property type="entry name" value="Dehydroquinate_synthase"/>
</dbReference>
<dbReference type="InterPro" id="IPR016037">
    <property type="entry name" value="DHQ_synth_AroB"/>
</dbReference>
<dbReference type="InterPro" id="IPR030963">
    <property type="entry name" value="DHQ_synth_fam"/>
</dbReference>
<dbReference type="InterPro" id="IPR030960">
    <property type="entry name" value="DHQS/DOIS_N"/>
</dbReference>
<dbReference type="InterPro" id="IPR056179">
    <property type="entry name" value="DHQS_C"/>
</dbReference>
<dbReference type="NCBIfam" id="TIGR01357">
    <property type="entry name" value="aroB"/>
    <property type="match status" value="1"/>
</dbReference>
<dbReference type="PANTHER" id="PTHR43622">
    <property type="entry name" value="3-DEHYDROQUINATE SYNTHASE"/>
    <property type="match status" value="1"/>
</dbReference>
<dbReference type="PANTHER" id="PTHR43622:SF7">
    <property type="entry name" value="3-DEHYDROQUINATE SYNTHASE, CHLOROPLASTIC"/>
    <property type="match status" value="1"/>
</dbReference>
<dbReference type="Pfam" id="PF01761">
    <property type="entry name" value="DHQ_synthase"/>
    <property type="match status" value="1"/>
</dbReference>
<dbReference type="Pfam" id="PF24621">
    <property type="entry name" value="DHQS_C"/>
    <property type="match status" value="1"/>
</dbReference>
<dbReference type="PIRSF" id="PIRSF001455">
    <property type="entry name" value="DHQ_synth"/>
    <property type="match status" value="1"/>
</dbReference>
<dbReference type="SUPFAM" id="SSF56796">
    <property type="entry name" value="Dehydroquinate synthase-like"/>
    <property type="match status" value="1"/>
</dbReference>
<proteinExistence type="inferred from homology"/>